<accession>Q921N6</accession>
<accession>Q3UUG2</accession>
<accession>Q8R0W3</accession>
<accession>Q8R1E2</accession>
<sequence>MLAELGFIRTIGENDEVPVEPESDSGDEEEEGPIVLGRKQKALQKNRSADFNPDFVFTEKEGMYDGSWALADVMSQLKKKRAATTLDEKIEKVRKRRKAEDKEAKSGKVEEKEGQADSDLKGQENPGEDEAGSKDEDSETDYSSEDEEILTKADTLKVKEKKKKKKGQAAGGFFEDASEYDKSLSFQDMNLSRPLLKAITAMGFKQPTPIQKACIPVGLLGKDICACAATGTGKTAAFALPVLERLIYKPRQAAVTRVLVLVPTRELGIQVHSVTKQLAQFCSITTCLAVGGLDVKSQEAALRAAPDILIATPGRLIDHLHNCPSFHLSSIEVLILDEADRMLDEYFEEQMKEIIRMCSHHRQTMLFSATMTDEVKDLASVSLKNPVRIFVNSNTDVAPFLRQEFIRIRPNREGDREAIVAALLMRTFTDHVMLFTQTKKQAHRMHILLGLLGLQVGELHGNLSQTQRLEALRRFKDEQIDILVATDVAARGLDIEGVKTVINFTMPNTVKHYVHRVGRTARAGRAGRSVSLVGEEERKMLKEIVKAAKAPVKARILPQDVILKFRDKIEKLEKDVYAVLQLEAEEKEMQQSEAQIDTAQRLLAKGKETADQEPERSWFQTKEERKKEKIAKALQEFDLALRGKKKRKKFMKDAKKKGEMTAEERSQFEILKAQMFAERLAKRNRRTKRARAMPEDEPTGPAKKQKQQQKSVFDEELTNTSKKALKQYRAGPSFEERKQSGLPRQRRGNFKSKSRYKRKK</sequence>
<gene>
    <name type="primary">Ddx27</name>
</gene>
<organism>
    <name type="scientific">Mus musculus</name>
    <name type="common">Mouse</name>
    <dbReference type="NCBI Taxonomy" id="10090"/>
    <lineage>
        <taxon>Eukaryota</taxon>
        <taxon>Metazoa</taxon>
        <taxon>Chordata</taxon>
        <taxon>Craniata</taxon>
        <taxon>Vertebrata</taxon>
        <taxon>Euteleostomi</taxon>
        <taxon>Mammalia</taxon>
        <taxon>Eutheria</taxon>
        <taxon>Euarchontoglires</taxon>
        <taxon>Glires</taxon>
        <taxon>Rodentia</taxon>
        <taxon>Myomorpha</taxon>
        <taxon>Muroidea</taxon>
        <taxon>Muridae</taxon>
        <taxon>Murinae</taxon>
        <taxon>Mus</taxon>
        <taxon>Mus</taxon>
    </lineage>
</organism>
<evidence type="ECO:0000250" key="1">
    <source>
        <dbReference type="UniProtKB" id="Q96GQ7"/>
    </source>
</evidence>
<evidence type="ECO:0000255" key="2"/>
<evidence type="ECO:0000255" key="3">
    <source>
        <dbReference type="PROSITE-ProRule" id="PRU00541"/>
    </source>
</evidence>
<evidence type="ECO:0000255" key="4">
    <source>
        <dbReference type="PROSITE-ProRule" id="PRU00542"/>
    </source>
</evidence>
<evidence type="ECO:0000256" key="5">
    <source>
        <dbReference type="SAM" id="MobiDB-lite"/>
    </source>
</evidence>
<evidence type="ECO:0000303" key="6">
    <source>
    </source>
</evidence>
<evidence type="ECO:0000305" key="7"/>
<evidence type="ECO:0007744" key="8">
    <source>
    </source>
</evidence>
<evidence type="ECO:0007744" key="9">
    <source>
    </source>
</evidence>
<name>DDX27_MOUSE</name>
<proteinExistence type="evidence at protein level"/>
<comment type="function">
    <text evidence="1">Probable ATP-dependent RNA helicase. Component of the nucleolar ribosomal RNA (rRNA) processing machinery that regulates 3' end formation of ribosomal 47S rRNA.</text>
</comment>
<comment type="catalytic activity">
    <reaction>
        <text>ATP + H2O = ADP + phosphate + H(+)</text>
        <dbReference type="Rhea" id="RHEA:13065"/>
        <dbReference type="ChEBI" id="CHEBI:15377"/>
        <dbReference type="ChEBI" id="CHEBI:15378"/>
        <dbReference type="ChEBI" id="CHEBI:30616"/>
        <dbReference type="ChEBI" id="CHEBI:43474"/>
        <dbReference type="ChEBI" id="CHEBI:456216"/>
        <dbReference type="EC" id="3.6.4.13"/>
    </reaction>
</comment>
<comment type="subunit">
    <text evidence="1">Associates with PeBoW complex, composed of BOP1, PES1 and WDR12. Interacts directly with BOP1 and PES1.</text>
</comment>
<comment type="subcellular location">
    <subcellularLocation>
        <location evidence="1">Nucleus</location>
        <location evidence="1">Nucleolus</location>
    </subcellularLocation>
    <subcellularLocation>
        <location evidence="1">Chromosome</location>
    </subcellularLocation>
    <text evidence="1">Associates with 60S and 90S pre-ribosomal particles.</text>
</comment>
<comment type="alternative products">
    <event type="alternative splicing"/>
    <isoform>
        <id>Q921N6-1</id>
        <name>1</name>
        <sequence type="displayed"/>
    </isoform>
    <isoform>
        <id>Q921N6-2</id>
        <name>2</name>
        <sequence type="described" ref="VSP_007073 VSP_007074"/>
    </isoform>
</comment>
<comment type="domain">
    <text evidence="1">The C-terminal domain regulates nucleolar localization.</text>
</comment>
<comment type="similarity">
    <text evidence="7">Belongs to the DEAD box helicase family. DDX27/DRS1 subfamily.</text>
</comment>
<comment type="sequence caution" evidence="7">
    <conflict type="erroneous initiation">
        <sequence resource="EMBL-CDS" id="AAH11321"/>
    </conflict>
    <text>Truncated N-terminus.</text>
</comment>
<keyword id="KW-0025">Alternative splicing</keyword>
<keyword id="KW-0067">ATP-binding</keyword>
<keyword id="KW-0158">Chromosome</keyword>
<keyword id="KW-0347">Helicase</keyword>
<keyword id="KW-0378">Hydrolase</keyword>
<keyword id="KW-0547">Nucleotide-binding</keyword>
<keyword id="KW-0539">Nucleus</keyword>
<keyword id="KW-0597">Phosphoprotein</keyword>
<keyword id="KW-1185">Reference proteome</keyword>
<keyword id="KW-0690">Ribosome biogenesis</keyword>
<keyword id="KW-0698">rRNA processing</keyword>
<protein>
    <recommendedName>
        <fullName>Probable ATP-dependent RNA helicase DDX27</fullName>
        <ecNumber>3.6.4.13</ecNumber>
    </recommendedName>
    <alternativeName>
        <fullName>DEAD box protein 27</fullName>
    </alternativeName>
</protein>
<reference key="1">
    <citation type="journal article" date="2005" name="Science">
        <title>The transcriptional landscape of the mammalian genome.</title>
        <authorList>
            <person name="Carninci P."/>
            <person name="Kasukawa T."/>
            <person name="Katayama S."/>
            <person name="Gough J."/>
            <person name="Frith M.C."/>
            <person name="Maeda N."/>
            <person name="Oyama R."/>
            <person name="Ravasi T."/>
            <person name="Lenhard B."/>
            <person name="Wells C."/>
            <person name="Kodzius R."/>
            <person name="Shimokawa K."/>
            <person name="Bajic V.B."/>
            <person name="Brenner S.E."/>
            <person name="Batalov S."/>
            <person name="Forrest A.R."/>
            <person name="Zavolan M."/>
            <person name="Davis M.J."/>
            <person name="Wilming L.G."/>
            <person name="Aidinis V."/>
            <person name="Allen J.E."/>
            <person name="Ambesi-Impiombato A."/>
            <person name="Apweiler R."/>
            <person name="Aturaliya R.N."/>
            <person name="Bailey T.L."/>
            <person name="Bansal M."/>
            <person name="Baxter L."/>
            <person name="Beisel K.W."/>
            <person name="Bersano T."/>
            <person name="Bono H."/>
            <person name="Chalk A.M."/>
            <person name="Chiu K.P."/>
            <person name="Choudhary V."/>
            <person name="Christoffels A."/>
            <person name="Clutterbuck D.R."/>
            <person name="Crowe M.L."/>
            <person name="Dalla E."/>
            <person name="Dalrymple B.P."/>
            <person name="de Bono B."/>
            <person name="Della Gatta G."/>
            <person name="di Bernardo D."/>
            <person name="Down T."/>
            <person name="Engstrom P."/>
            <person name="Fagiolini M."/>
            <person name="Faulkner G."/>
            <person name="Fletcher C.F."/>
            <person name="Fukushima T."/>
            <person name="Furuno M."/>
            <person name="Futaki S."/>
            <person name="Gariboldi M."/>
            <person name="Georgii-Hemming P."/>
            <person name="Gingeras T.R."/>
            <person name="Gojobori T."/>
            <person name="Green R.E."/>
            <person name="Gustincich S."/>
            <person name="Harbers M."/>
            <person name="Hayashi Y."/>
            <person name="Hensch T.K."/>
            <person name="Hirokawa N."/>
            <person name="Hill D."/>
            <person name="Huminiecki L."/>
            <person name="Iacono M."/>
            <person name="Ikeo K."/>
            <person name="Iwama A."/>
            <person name="Ishikawa T."/>
            <person name="Jakt M."/>
            <person name="Kanapin A."/>
            <person name="Katoh M."/>
            <person name="Kawasawa Y."/>
            <person name="Kelso J."/>
            <person name="Kitamura H."/>
            <person name="Kitano H."/>
            <person name="Kollias G."/>
            <person name="Krishnan S.P."/>
            <person name="Kruger A."/>
            <person name="Kummerfeld S.K."/>
            <person name="Kurochkin I.V."/>
            <person name="Lareau L.F."/>
            <person name="Lazarevic D."/>
            <person name="Lipovich L."/>
            <person name="Liu J."/>
            <person name="Liuni S."/>
            <person name="McWilliam S."/>
            <person name="Madan Babu M."/>
            <person name="Madera M."/>
            <person name="Marchionni L."/>
            <person name="Matsuda H."/>
            <person name="Matsuzawa S."/>
            <person name="Miki H."/>
            <person name="Mignone F."/>
            <person name="Miyake S."/>
            <person name="Morris K."/>
            <person name="Mottagui-Tabar S."/>
            <person name="Mulder N."/>
            <person name="Nakano N."/>
            <person name="Nakauchi H."/>
            <person name="Ng P."/>
            <person name="Nilsson R."/>
            <person name="Nishiguchi S."/>
            <person name="Nishikawa S."/>
            <person name="Nori F."/>
            <person name="Ohara O."/>
            <person name="Okazaki Y."/>
            <person name="Orlando V."/>
            <person name="Pang K.C."/>
            <person name="Pavan W.J."/>
            <person name="Pavesi G."/>
            <person name="Pesole G."/>
            <person name="Petrovsky N."/>
            <person name="Piazza S."/>
            <person name="Reed J."/>
            <person name="Reid J.F."/>
            <person name="Ring B.Z."/>
            <person name="Ringwald M."/>
            <person name="Rost B."/>
            <person name="Ruan Y."/>
            <person name="Salzberg S.L."/>
            <person name="Sandelin A."/>
            <person name="Schneider C."/>
            <person name="Schoenbach C."/>
            <person name="Sekiguchi K."/>
            <person name="Semple C.A."/>
            <person name="Seno S."/>
            <person name="Sessa L."/>
            <person name="Sheng Y."/>
            <person name="Shibata Y."/>
            <person name="Shimada H."/>
            <person name="Shimada K."/>
            <person name="Silva D."/>
            <person name="Sinclair B."/>
            <person name="Sperling S."/>
            <person name="Stupka E."/>
            <person name="Sugiura K."/>
            <person name="Sultana R."/>
            <person name="Takenaka Y."/>
            <person name="Taki K."/>
            <person name="Tammoja K."/>
            <person name="Tan S.L."/>
            <person name="Tang S."/>
            <person name="Taylor M.S."/>
            <person name="Tegner J."/>
            <person name="Teichmann S.A."/>
            <person name="Ueda H.R."/>
            <person name="van Nimwegen E."/>
            <person name="Verardo R."/>
            <person name="Wei C.L."/>
            <person name="Yagi K."/>
            <person name="Yamanishi H."/>
            <person name="Zabarovsky E."/>
            <person name="Zhu S."/>
            <person name="Zimmer A."/>
            <person name="Hide W."/>
            <person name="Bult C."/>
            <person name="Grimmond S.M."/>
            <person name="Teasdale R.D."/>
            <person name="Liu E.T."/>
            <person name="Brusic V."/>
            <person name="Quackenbush J."/>
            <person name="Wahlestedt C."/>
            <person name="Mattick J.S."/>
            <person name="Hume D.A."/>
            <person name="Kai C."/>
            <person name="Sasaki D."/>
            <person name="Tomaru Y."/>
            <person name="Fukuda S."/>
            <person name="Kanamori-Katayama M."/>
            <person name="Suzuki M."/>
            <person name="Aoki J."/>
            <person name="Arakawa T."/>
            <person name="Iida J."/>
            <person name="Imamura K."/>
            <person name="Itoh M."/>
            <person name="Kato T."/>
            <person name="Kawaji H."/>
            <person name="Kawagashira N."/>
            <person name="Kawashima T."/>
            <person name="Kojima M."/>
            <person name="Kondo S."/>
            <person name="Konno H."/>
            <person name="Nakano K."/>
            <person name="Ninomiya N."/>
            <person name="Nishio T."/>
            <person name="Okada M."/>
            <person name="Plessy C."/>
            <person name="Shibata K."/>
            <person name="Shiraki T."/>
            <person name="Suzuki S."/>
            <person name="Tagami M."/>
            <person name="Waki K."/>
            <person name="Watahiki A."/>
            <person name="Okamura-Oho Y."/>
            <person name="Suzuki H."/>
            <person name="Kawai J."/>
            <person name="Hayashizaki Y."/>
        </authorList>
    </citation>
    <scope>NUCLEOTIDE SEQUENCE [LARGE SCALE MRNA]</scope>
    <source>
        <strain>C57BL/6J</strain>
        <tissue>Forelimb</tissue>
        <tissue>Hypothalamus</tissue>
    </source>
</reference>
<reference key="2">
    <citation type="journal article" date="2009" name="PLoS Biol.">
        <title>Lineage-specific biology revealed by a finished genome assembly of the mouse.</title>
        <authorList>
            <person name="Church D.M."/>
            <person name="Goodstadt L."/>
            <person name="Hillier L.W."/>
            <person name="Zody M.C."/>
            <person name="Goldstein S."/>
            <person name="She X."/>
            <person name="Bult C.J."/>
            <person name="Agarwala R."/>
            <person name="Cherry J.L."/>
            <person name="DiCuccio M."/>
            <person name="Hlavina W."/>
            <person name="Kapustin Y."/>
            <person name="Meric P."/>
            <person name="Maglott D."/>
            <person name="Birtle Z."/>
            <person name="Marques A.C."/>
            <person name="Graves T."/>
            <person name="Zhou S."/>
            <person name="Teague B."/>
            <person name="Potamousis K."/>
            <person name="Churas C."/>
            <person name="Place M."/>
            <person name="Herschleb J."/>
            <person name="Runnheim R."/>
            <person name="Forrest D."/>
            <person name="Amos-Landgraf J."/>
            <person name="Schwartz D.C."/>
            <person name="Cheng Z."/>
            <person name="Lindblad-Toh K."/>
            <person name="Eichler E.E."/>
            <person name="Ponting C.P."/>
        </authorList>
    </citation>
    <scope>NUCLEOTIDE SEQUENCE [LARGE SCALE GENOMIC DNA]</scope>
    <source>
        <strain>C57BL/6J</strain>
    </source>
</reference>
<reference key="3">
    <citation type="submission" date="2005-07" db="EMBL/GenBank/DDBJ databases">
        <authorList>
            <person name="Mural R.J."/>
            <person name="Adams M.D."/>
            <person name="Myers E.W."/>
            <person name="Smith H.O."/>
            <person name="Venter J.C."/>
        </authorList>
    </citation>
    <scope>NUCLEOTIDE SEQUENCE [LARGE SCALE GENOMIC DNA]</scope>
</reference>
<reference key="4">
    <citation type="journal article" date="2004" name="Genome Res.">
        <title>The status, quality, and expansion of the NIH full-length cDNA project: the Mammalian Gene Collection (MGC).</title>
        <authorList>
            <consortium name="The MGC Project Team"/>
        </authorList>
    </citation>
    <scope>NUCLEOTIDE SEQUENCE [LARGE SCALE MRNA] (ISOFORMS 1 AND 2)</scope>
    <source>
        <tissue>Eye</tissue>
        <tissue>Mammary cancer</tissue>
        <tissue>Salivary gland</tissue>
    </source>
</reference>
<reference key="5">
    <citation type="journal article" date="2007" name="Proc. Natl. Acad. Sci. U.S.A.">
        <title>Large-scale phosphorylation analysis of mouse liver.</title>
        <authorList>
            <person name="Villen J."/>
            <person name="Beausoleil S.A."/>
            <person name="Gerber S.A."/>
            <person name="Gygi S.P."/>
        </authorList>
    </citation>
    <scope>PHOSPHORYLATION [LARGE SCALE ANALYSIS] AT SER-23 AND SER-25</scope>
    <scope>IDENTIFICATION BY MASS SPECTROMETRY [LARGE SCALE ANALYSIS]</scope>
    <source>
        <tissue>Liver</tissue>
    </source>
</reference>
<reference key="6">
    <citation type="journal article" date="2010" name="Cell">
        <title>A tissue-specific atlas of mouse protein phosphorylation and expression.</title>
        <authorList>
            <person name="Huttlin E.L."/>
            <person name="Jedrychowski M.P."/>
            <person name="Elias J.E."/>
            <person name="Goswami T."/>
            <person name="Rad R."/>
            <person name="Beausoleil S.A."/>
            <person name="Villen J."/>
            <person name="Haas W."/>
            <person name="Sowa M.E."/>
            <person name="Gygi S.P."/>
        </authorList>
    </citation>
    <scope>PHOSPHORYLATION [LARGE SCALE ANALYSIS] AT SER-23 AND SER-25</scope>
    <scope>IDENTIFICATION BY MASS SPECTROMETRY [LARGE SCALE ANALYSIS]</scope>
    <source>
        <tissue>Brain</tissue>
        <tissue>Kidney</tissue>
        <tissue>Lung</tissue>
        <tissue>Spleen</tissue>
        <tissue>Testis</tissue>
    </source>
</reference>
<feature type="chain" id="PRO_0000055032" description="Probable ATP-dependent RNA helicase DDX27">
    <location>
        <begin position="1"/>
        <end position="760"/>
    </location>
</feature>
<feature type="domain" description="Helicase ATP-binding" evidence="3">
    <location>
        <begin position="215"/>
        <end position="389"/>
    </location>
</feature>
<feature type="domain" description="Helicase C-terminal" evidence="4">
    <location>
        <begin position="419"/>
        <end position="569"/>
    </location>
</feature>
<feature type="region of interest" description="Disordered" evidence="5">
    <location>
        <begin position="1"/>
        <end position="50"/>
    </location>
</feature>
<feature type="region of interest" description="Disordered" evidence="5">
    <location>
        <begin position="80"/>
        <end position="149"/>
    </location>
</feature>
<feature type="region of interest" description="Disordered" evidence="5">
    <location>
        <begin position="605"/>
        <end position="624"/>
    </location>
</feature>
<feature type="region of interest" description="Disordered" evidence="5">
    <location>
        <begin position="679"/>
        <end position="760"/>
    </location>
</feature>
<feature type="short sequence motif" description="Required for interaction with the PEBOW complex" evidence="1">
    <location>
        <begin position="55"/>
        <end position="57"/>
    </location>
</feature>
<feature type="short sequence motif" description="Nuclear localization signal" evidence="2">
    <location>
        <begin position="157"/>
        <end position="166"/>
    </location>
</feature>
<feature type="short sequence motif" description="Q motif">
    <location>
        <begin position="184"/>
        <end position="212"/>
    </location>
</feature>
<feature type="short sequence motif" description="DEAD box">
    <location>
        <begin position="337"/>
        <end position="340"/>
    </location>
</feature>
<feature type="compositionally biased region" description="Acidic residues" evidence="5">
    <location>
        <begin position="13"/>
        <end position="32"/>
    </location>
</feature>
<feature type="compositionally biased region" description="Basic and acidic residues" evidence="5">
    <location>
        <begin position="98"/>
        <end position="122"/>
    </location>
</feature>
<feature type="compositionally biased region" description="Acidic residues" evidence="5">
    <location>
        <begin position="126"/>
        <end position="148"/>
    </location>
</feature>
<feature type="compositionally biased region" description="Basic residues" evidence="5">
    <location>
        <begin position="682"/>
        <end position="691"/>
    </location>
</feature>
<feature type="compositionally biased region" description="Basic residues" evidence="5">
    <location>
        <begin position="744"/>
        <end position="760"/>
    </location>
</feature>
<feature type="binding site" evidence="3">
    <location>
        <begin position="228"/>
        <end position="235"/>
    </location>
    <ligand>
        <name>ATP</name>
        <dbReference type="ChEBI" id="CHEBI:30616"/>
    </ligand>
</feature>
<feature type="modified residue" description="Phosphoserine" evidence="8 9">
    <location>
        <position position="23"/>
    </location>
</feature>
<feature type="modified residue" description="Phosphoserine" evidence="8 9">
    <location>
        <position position="25"/>
    </location>
</feature>
<feature type="modified residue" description="Phosphoserine" evidence="1">
    <location>
        <position position="48"/>
    </location>
</feature>
<feature type="modified residue" description="Phosphoserine" evidence="1">
    <location>
        <position position="133"/>
    </location>
</feature>
<feature type="modified residue" description="Phosphoserine" evidence="1">
    <location>
        <position position="144"/>
    </location>
</feature>
<feature type="splice variant" id="VSP_007073" description="In isoform 2." evidence="6">
    <original>G</original>
    <variation>E</variation>
    <location>
        <position position="292"/>
    </location>
</feature>
<feature type="splice variant" id="VSP_007074" description="In isoform 2." evidence="6">
    <location>
        <begin position="293"/>
        <end position="760"/>
    </location>
</feature>
<feature type="sequence conflict" description="In Ref. 4; AAH11321." evidence="7" ref="4">
    <original>R</original>
    <variation>K</variation>
    <location>
        <position position="341"/>
    </location>
</feature>
<dbReference type="EC" id="3.6.4.13"/>
<dbReference type="EMBL" id="AK134274">
    <property type="protein sequence ID" value="BAE22077.1"/>
    <property type="molecule type" value="mRNA"/>
</dbReference>
<dbReference type="EMBL" id="AK138442">
    <property type="protein sequence ID" value="BAE23664.1"/>
    <property type="molecule type" value="mRNA"/>
</dbReference>
<dbReference type="EMBL" id="AL591711">
    <property type="status" value="NOT_ANNOTATED_CDS"/>
    <property type="molecule type" value="Genomic_DNA"/>
</dbReference>
<dbReference type="EMBL" id="CH466551">
    <property type="protein sequence ID" value="EDL06495.1"/>
    <property type="molecule type" value="Genomic_DNA"/>
</dbReference>
<dbReference type="EMBL" id="BC011321">
    <property type="protein sequence ID" value="AAH11321.1"/>
    <property type="status" value="ALT_INIT"/>
    <property type="molecule type" value="mRNA"/>
</dbReference>
<dbReference type="EMBL" id="BC024730">
    <property type="protein sequence ID" value="AAH24730.1"/>
    <property type="molecule type" value="mRNA"/>
</dbReference>
<dbReference type="EMBL" id="BC026381">
    <property type="protein sequence ID" value="AAH26381.1"/>
    <property type="molecule type" value="mRNA"/>
</dbReference>
<dbReference type="CCDS" id="CCDS38336.1">
    <molecule id="Q921N6-1"/>
</dbReference>
<dbReference type="RefSeq" id="NP_694705.2">
    <molecule id="Q921N6-1"/>
    <property type="nucleotide sequence ID" value="NM_153065.3"/>
</dbReference>
<dbReference type="SMR" id="Q921N6"/>
<dbReference type="BioGRID" id="230792">
    <property type="interactions" value="40"/>
</dbReference>
<dbReference type="CORUM" id="Q921N6"/>
<dbReference type="FunCoup" id="Q921N6">
    <property type="interactions" value="2455"/>
</dbReference>
<dbReference type="IntAct" id="Q921N6">
    <property type="interactions" value="1"/>
</dbReference>
<dbReference type="STRING" id="10090.ENSMUSP00000018143"/>
<dbReference type="GlyGen" id="Q921N6">
    <property type="glycosylation" value="1 site, 1 O-linked glycan (1 site)"/>
</dbReference>
<dbReference type="iPTMnet" id="Q921N6"/>
<dbReference type="PhosphoSitePlus" id="Q921N6"/>
<dbReference type="jPOST" id="Q921N6"/>
<dbReference type="PaxDb" id="10090-ENSMUSP00000018143"/>
<dbReference type="PeptideAtlas" id="Q921N6"/>
<dbReference type="ProteomicsDB" id="279849">
    <molecule id="Q921N6-1"/>
</dbReference>
<dbReference type="ProteomicsDB" id="279850">
    <molecule id="Q921N6-2"/>
</dbReference>
<dbReference type="Pumba" id="Q921N6"/>
<dbReference type="Antibodypedia" id="13624">
    <property type="antibodies" value="169 antibodies from 24 providers"/>
</dbReference>
<dbReference type="DNASU" id="228889"/>
<dbReference type="Ensembl" id="ENSMUST00000018143.16">
    <molecule id="Q921N6-1"/>
    <property type="protein sequence ID" value="ENSMUSP00000018143.10"/>
    <property type="gene ID" value="ENSMUSG00000017999.17"/>
</dbReference>
<dbReference type="Ensembl" id="ENSMUST00000150571.2">
    <molecule id="Q921N6-2"/>
    <property type="protein sequence ID" value="ENSMUSP00000135265.2"/>
    <property type="gene ID" value="ENSMUSG00000017999.17"/>
</dbReference>
<dbReference type="GeneID" id="228889"/>
<dbReference type="KEGG" id="mmu:228889"/>
<dbReference type="UCSC" id="uc008nza.1">
    <molecule id="Q921N6-2"/>
    <property type="organism name" value="mouse"/>
</dbReference>
<dbReference type="UCSC" id="uc008nzb.1">
    <molecule id="Q921N6-1"/>
    <property type="organism name" value="mouse"/>
</dbReference>
<dbReference type="AGR" id="MGI:2385884"/>
<dbReference type="CTD" id="55661"/>
<dbReference type="MGI" id="MGI:2385884">
    <property type="gene designation" value="Ddx27"/>
</dbReference>
<dbReference type="VEuPathDB" id="HostDB:ENSMUSG00000017999"/>
<dbReference type="eggNOG" id="KOG0338">
    <property type="taxonomic scope" value="Eukaryota"/>
</dbReference>
<dbReference type="GeneTree" id="ENSGT00550000074997"/>
<dbReference type="HOGENOM" id="CLU_003041_3_3_1"/>
<dbReference type="InParanoid" id="Q921N6"/>
<dbReference type="OMA" id="MIDPPKQ"/>
<dbReference type="OrthoDB" id="10259843at2759"/>
<dbReference type="PhylomeDB" id="Q921N6"/>
<dbReference type="TreeFam" id="TF314780"/>
<dbReference type="BioGRID-ORCS" id="228889">
    <property type="hits" value="21 hits in 81 CRISPR screens"/>
</dbReference>
<dbReference type="ChiTaRS" id="Ddx27">
    <property type="organism name" value="mouse"/>
</dbReference>
<dbReference type="PRO" id="PR:Q921N6"/>
<dbReference type="Proteomes" id="UP000000589">
    <property type="component" value="Chromosome 2"/>
</dbReference>
<dbReference type="RNAct" id="Q921N6">
    <property type="molecule type" value="protein"/>
</dbReference>
<dbReference type="Bgee" id="ENSMUSG00000017999">
    <property type="expression patterns" value="Expressed in ectoplacental cone and 263 other cell types or tissues"/>
</dbReference>
<dbReference type="ExpressionAtlas" id="Q921N6">
    <property type="expression patterns" value="baseline and differential"/>
</dbReference>
<dbReference type="GO" id="GO:0005694">
    <property type="term" value="C:chromosome"/>
    <property type="evidence" value="ECO:0000250"/>
    <property type="project" value="UniProtKB"/>
</dbReference>
<dbReference type="GO" id="GO:0005730">
    <property type="term" value="C:nucleolus"/>
    <property type="evidence" value="ECO:0000250"/>
    <property type="project" value="UniProtKB"/>
</dbReference>
<dbReference type="GO" id="GO:0005524">
    <property type="term" value="F:ATP binding"/>
    <property type="evidence" value="ECO:0007669"/>
    <property type="project" value="UniProtKB-KW"/>
</dbReference>
<dbReference type="GO" id="GO:0016887">
    <property type="term" value="F:ATP hydrolysis activity"/>
    <property type="evidence" value="ECO:0007669"/>
    <property type="project" value="RHEA"/>
</dbReference>
<dbReference type="GO" id="GO:0003676">
    <property type="term" value="F:nucleic acid binding"/>
    <property type="evidence" value="ECO:0007669"/>
    <property type="project" value="InterPro"/>
</dbReference>
<dbReference type="GO" id="GO:0003724">
    <property type="term" value="F:RNA helicase activity"/>
    <property type="evidence" value="ECO:0007669"/>
    <property type="project" value="UniProtKB-EC"/>
</dbReference>
<dbReference type="GO" id="GO:0006364">
    <property type="term" value="P:rRNA processing"/>
    <property type="evidence" value="ECO:0000250"/>
    <property type="project" value="UniProtKB"/>
</dbReference>
<dbReference type="CDD" id="cd17947">
    <property type="entry name" value="DEADc_DDX27"/>
    <property type="match status" value="1"/>
</dbReference>
<dbReference type="CDD" id="cd18787">
    <property type="entry name" value="SF2_C_DEAD"/>
    <property type="match status" value="1"/>
</dbReference>
<dbReference type="FunFam" id="3.40.50.300:FF:000842">
    <property type="entry name" value="ATP-dependent RNA helicase DRS1"/>
    <property type="match status" value="1"/>
</dbReference>
<dbReference type="FunFam" id="3.40.50.300:FF:001134">
    <property type="entry name" value="Probable ATP-dependent RNA helicase DDX27"/>
    <property type="match status" value="1"/>
</dbReference>
<dbReference type="Gene3D" id="3.40.50.300">
    <property type="entry name" value="P-loop containing nucleotide triphosphate hydrolases"/>
    <property type="match status" value="2"/>
</dbReference>
<dbReference type="InterPro" id="IPR011545">
    <property type="entry name" value="DEAD/DEAH_box_helicase_dom"/>
</dbReference>
<dbReference type="InterPro" id="IPR050079">
    <property type="entry name" value="DEAD_box_RNA_helicase"/>
</dbReference>
<dbReference type="InterPro" id="IPR014001">
    <property type="entry name" value="Helicase_ATP-bd"/>
</dbReference>
<dbReference type="InterPro" id="IPR001650">
    <property type="entry name" value="Helicase_C-like"/>
</dbReference>
<dbReference type="InterPro" id="IPR027417">
    <property type="entry name" value="P-loop_NTPase"/>
</dbReference>
<dbReference type="InterPro" id="IPR000629">
    <property type="entry name" value="RNA-helicase_DEAD-box_CS"/>
</dbReference>
<dbReference type="InterPro" id="IPR014014">
    <property type="entry name" value="RNA_helicase_DEAD_Q_motif"/>
</dbReference>
<dbReference type="PANTHER" id="PTHR47959">
    <property type="entry name" value="ATP-DEPENDENT RNA HELICASE RHLE-RELATED"/>
    <property type="match status" value="1"/>
</dbReference>
<dbReference type="PANTHER" id="PTHR47959:SF22">
    <property type="entry name" value="RNA HELICASE"/>
    <property type="match status" value="1"/>
</dbReference>
<dbReference type="Pfam" id="PF00270">
    <property type="entry name" value="DEAD"/>
    <property type="match status" value="1"/>
</dbReference>
<dbReference type="Pfam" id="PF00271">
    <property type="entry name" value="Helicase_C"/>
    <property type="match status" value="1"/>
</dbReference>
<dbReference type="SMART" id="SM00487">
    <property type="entry name" value="DEXDc"/>
    <property type="match status" value="1"/>
</dbReference>
<dbReference type="SMART" id="SM00490">
    <property type="entry name" value="HELICc"/>
    <property type="match status" value="1"/>
</dbReference>
<dbReference type="SUPFAM" id="SSF52540">
    <property type="entry name" value="P-loop containing nucleoside triphosphate hydrolases"/>
    <property type="match status" value="2"/>
</dbReference>
<dbReference type="PROSITE" id="PS00039">
    <property type="entry name" value="DEAD_ATP_HELICASE"/>
    <property type="match status" value="1"/>
</dbReference>
<dbReference type="PROSITE" id="PS51192">
    <property type="entry name" value="HELICASE_ATP_BIND_1"/>
    <property type="match status" value="1"/>
</dbReference>
<dbReference type="PROSITE" id="PS51194">
    <property type="entry name" value="HELICASE_CTER"/>
    <property type="match status" value="1"/>
</dbReference>
<dbReference type="PROSITE" id="PS51195">
    <property type="entry name" value="Q_MOTIF"/>
    <property type="match status" value="1"/>
</dbReference>